<organism>
    <name type="scientific">Fusobacterium nucleatum subsp. nucleatum (strain ATCC 25586 / DSM 15643 / BCRC 10681 / CIP 101130 / JCM 8532 / KCTC 2640 / LMG 13131 / VPI 4355)</name>
    <dbReference type="NCBI Taxonomy" id="190304"/>
    <lineage>
        <taxon>Bacteria</taxon>
        <taxon>Fusobacteriati</taxon>
        <taxon>Fusobacteriota</taxon>
        <taxon>Fusobacteriia</taxon>
        <taxon>Fusobacteriales</taxon>
        <taxon>Fusobacteriaceae</taxon>
        <taxon>Fusobacterium</taxon>
    </lineage>
</organism>
<reference key="1">
    <citation type="journal article" date="2002" name="J. Bacteriol.">
        <title>Genome sequence and analysis of the oral bacterium Fusobacterium nucleatum strain ATCC 25586.</title>
        <authorList>
            <person name="Kapatral V."/>
            <person name="Anderson I."/>
            <person name="Ivanova N."/>
            <person name="Reznik G."/>
            <person name="Los T."/>
            <person name="Lykidis A."/>
            <person name="Bhattacharyya A."/>
            <person name="Bartman A."/>
            <person name="Gardner W."/>
            <person name="Grechkin G."/>
            <person name="Zhu L."/>
            <person name="Vasieva O."/>
            <person name="Chu L."/>
            <person name="Kogan Y."/>
            <person name="Chaga O."/>
            <person name="Goltsman E."/>
            <person name="Bernal A."/>
            <person name="Larsen N."/>
            <person name="D'Souza M."/>
            <person name="Walunas T."/>
            <person name="Pusch G."/>
            <person name="Haselkorn R."/>
            <person name="Fonstein M."/>
            <person name="Kyrpides N.C."/>
            <person name="Overbeek R."/>
        </authorList>
    </citation>
    <scope>NUCLEOTIDE SEQUENCE [LARGE SCALE GENOMIC DNA]</scope>
    <source>
        <strain>ATCC 25586 / DSM 15643 / BCRC 10681 / CIP 101130 / JCM 8532 / KCTC 2640 / LMG 13131 / VPI 4355</strain>
    </source>
</reference>
<gene>
    <name evidence="1" type="primary">rplC</name>
    <name type="ordered locus">FN1645</name>
</gene>
<evidence type="ECO:0000255" key="1">
    <source>
        <dbReference type="HAMAP-Rule" id="MF_01325"/>
    </source>
</evidence>
<evidence type="ECO:0000256" key="2">
    <source>
        <dbReference type="SAM" id="MobiDB-lite"/>
    </source>
</evidence>
<evidence type="ECO:0000305" key="3"/>
<protein>
    <recommendedName>
        <fullName evidence="1">Large ribosomal subunit protein uL3</fullName>
    </recommendedName>
    <alternativeName>
        <fullName evidence="3">50S ribosomal protein L3</fullName>
    </alternativeName>
</protein>
<name>RL3_FUSNN</name>
<dbReference type="EMBL" id="AE009951">
    <property type="protein sequence ID" value="AAL93760.1"/>
    <property type="molecule type" value="Genomic_DNA"/>
</dbReference>
<dbReference type="RefSeq" id="NP_602461.1">
    <property type="nucleotide sequence ID" value="NC_003454.1"/>
</dbReference>
<dbReference type="RefSeq" id="WP_011015720.1">
    <property type="nucleotide sequence ID" value="NZ_OZ209243.1"/>
</dbReference>
<dbReference type="SMR" id="Q8RIF5"/>
<dbReference type="FunCoup" id="Q8RIF5">
    <property type="interactions" value="407"/>
</dbReference>
<dbReference type="STRING" id="190304.FN1645"/>
<dbReference type="PaxDb" id="190304-FN1645"/>
<dbReference type="EnsemblBacteria" id="AAL93760">
    <property type="protein sequence ID" value="AAL93760"/>
    <property type="gene ID" value="FN1645"/>
</dbReference>
<dbReference type="GeneID" id="79782583"/>
<dbReference type="KEGG" id="fnu:FN1645"/>
<dbReference type="PATRIC" id="fig|190304.8.peg.138"/>
<dbReference type="eggNOG" id="COG0087">
    <property type="taxonomic scope" value="Bacteria"/>
</dbReference>
<dbReference type="HOGENOM" id="CLU_044142_4_1_0"/>
<dbReference type="InParanoid" id="Q8RIF5"/>
<dbReference type="BioCyc" id="FNUC190304:G1FZS-148-MONOMER"/>
<dbReference type="Proteomes" id="UP000002521">
    <property type="component" value="Chromosome"/>
</dbReference>
<dbReference type="GO" id="GO:0022625">
    <property type="term" value="C:cytosolic large ribosomal subunit"/>
    <property type="evidence" value="ECO:0000318"/>
    <property type="project" value="GO_Central"/>
</dbReference>
<dbReference type="GO" id="GO:0019843">
    <property type="term" value="F:rRNA binding"/>
    <property type="evidence" value="ECO:0007669"/>
    <property type="project" value="UniProtKB-UniRule"/>
</dbReference>
<dbReference type="GO" id="GO:0003735">
    <property type="term" value="F:structural constituent of ribosome"/>
    <property type="evidence" value="ECO:0000318"/>
    <property type="project" value="GO_Central"/>
</dbReference>
<dbReference type="GO" id="GO:0006412">
    <property type="term" value="P:translation"/>
    <property type="evidence" value="ECO:0007669"/>
    <property type="project" value="UniProtKB-UniRule"/>
</dbReference>
<dbReference type="FunFam" id="2.40.30.10:FF:000004">
    <property type="entry name" value="50S ribosomal protein L3"/>
    <property type="match status" value="1"/>
</dbReference>
<dbReference type="FunFam" id="3.30.160.810:FF:000001">
    <property type="entry name" value="50S ribosomal protein L3"/>
    <property type="match status" value="1"/>
</dbReference>
<dbReference type="Gene3D" id="3.30.160.810">
    <property type="match status" value="1"/>
</dbReference>
<dbReference type="Gene3D" id="2.40.30.10">
    <property type="entry name" value="Translation factors"/>
    <property type="match status" value="1"/>
</dbReference>
<dbReference type="HAMAP" id="MF_01325_B">
    <property type="entry name" value="Ribosomal_uL3_B"/>
    <property type="match status" value="1"/>
</dbReference>
<dbReference type="InterPro" id="IPR000597">
    <property type="entry name" value="Ribosomal_uL3"/>
</dbReference>
<dbReference type="InterPro" id="IPR019927">
    <property type="entry name" value="Ribosomal_uL3_bac/org-type"/>
</dbReference>
<dbReference type="InterPro" id="IPR009000">
    <property type="entry name" value="Transl_B-barrel_sf"/>
</dbReference>
<dbReference type="NCBIfam" id="TIGR03625">
    <property type="entry name" value="L3_bact"/>
    <property type="match status" value="1"/>
</dbReference>
<dbReference type="PANTHER" id="PTHR11229">
    <property type="entry name" value="50S RIBOSOMAL PROTEIN L3"/>
    <property type="match status" value="1"/>
</dbReference>
<dbReference type="PANTHER" id="PTHR11229:SF16">
    <property type="entry name" value="LARGE RIBOSOMAL SUBUNIT PROTEIN UL3C"/>
    <property type="match status" value="1"/>
</dbReference>
<dbReference type="Pfam" id="PF00297">
    <property type="entry name" value="Ribosomal_L3"/>
    <property type="match status" value="1"/>
</dbReference>
<dbReference type="SUPFAM" id="SSF50447">
    <property type="entry name" value="Translation proteins"/>
    <property type="match status" value="1"/>
</dbReference>
<sequence length="211" mass="22631">MSGILGKKIGMTQIFEDGKFVPVTVVEAGPNFVLQKKTEEKDGYVALQLGFDEKKEKNTTKPLMGIFNKAGVKPQRFVKELEVESVDGYELGQEIKVDVLTEVGYVDITGTSKGKGTSGVMKKHGFSGNRASHGVSRNHRLGGSIGMSSWPGKVLKGKKMAGQHGNATVTVQNLKVVKVDAEHNLLLIKGAVPGAKNSYLVIKPAVKKVIG</sequence>
<comment type="function">
    <text evidence="1">One of the primary rRNA binding proteins, it binds directly near the 3'-end of the 23S rRNA, where it nucleates assembly of the 50S subunit.</text>
</comment>
<comment type="subunit">
    <text evidence="1">Part of the 50S ribosomal subunit. Forms a cluster with proteins L14 and L19.</text>
</comment>
<comment type="similarity">
    <text evidence="1">Belongs to the universal ribosomal protein uL3 family.</text>
</comment>
<accession>Q8RIF5</accession>
<proteinExistence type="inferred from homology"/>
<feature type="chain" id="PRO_0000077102" description="Large ribosomal subunit protein uL3">
    <location>
        <begin position="1"/>
        <end position="211"/>
    </location>
</feature>
<feature type="region of interest" description="Disordered" evidence="2">
    <location>
        <begin position="116"/>
        <end position="142"/>
    </location>
</feature>
<keyword id="KW-1185">Reference proteome</keyword>
<keyword id="KW-0687">Ribonucleoprotein</keyword>
<keyword id="KW-0689">Ribosomal protein</keyword>
<keyword id="KW-0694">RNA-binding</keyword>
<keyword id="KW-0699">rRNA-binding</keyword>